<reference key="1">
    <citation type="journal article" date="1985" name="Arch. Biochem. Biophys.">
        <title>A toxic thionin from Pyrularia pubera: purification, properties, and amino acid sequence.</title>
        <authorList>
            <person name="Vernon L.P."/>
            <person name="Evett G.E."/>
            <person name="Zeikus R.D."/>
            <person name="Gray W.R."/>
        </authorList>
    </citation>
    <scope>PROTEIN SEQUENCE</scope>
    <scope>SUBCELLULAR LOCATION</scope>
</reference>
<dbReference type="PIR" id="A24074">
    <property type="entry name" value="A24074"/>
</dbReference>
<dbReference type="SMR" id="P07504"/>
<dbReference type="GO" id="GO:0005576">
    <property type="term" value="C:extracellular region"/>
    <property type="evidence" value="ECO:0007669"/>
    <property type="project" value="UniProtKB-SubCell"/>
</dbReference>
<dbReference type="GO" id="GO:0090729">
    <property type="term" value="F:toxin activity"/>
    <property type="evidence" value="ECO:0007669"/>
    <property type="project" value="UniProtKB-KW"/>
</dbReference>
<dbReference type="GO" id="GO:0006952">
    <property type="term" value="P:defense response"/>
    <property type="evidence" value="ECO:0007669"/>
    <property type="project" value="UniProtKB-KW"/>
</dbReference>
<dbReference type="FunFam" id="3.30.1350.10:FF:000001">
    <property type="entry name" value="Hellethionin-D"/>
    <property type="match status" value="1"/>
</dbReference>
<dbReference type="Gene3D" id="3.30.1350.10">
    <property type="entry name" value="Thionin-like"/>
    <property type="match status" value="1"/>
</dbReference>
<dbReference type="InterPro" id="IPR001010">
    <property type="entry name" value="Thionin"/>
</dbReference>
<dbReference type="InterPro" id="IPR036391">
    <property type="entry name" value="Thionin-like_sf"/>
</dbReference>
<dbReference type="PANTHER" id="PTHR33920">
    <property type="entry name" value="THIONIN-2.1-RELATED"/>
    <property type="match status" value="1"/>
</dbReference>
<dbReference type="PANTHER" id="PTHR33920:SF2">
    <property type="entry name" value="THIONIN-2.1-RELATED"/>
    <property type="match status" value="1"/>
</dbReference>
<dbReference type="Pfam" id="PF00321">
    <property type="entry name" value="Thionin"/>
    <property type="match status" value="1"/>
</dbReference>
<dbReference type="PRINTS" id="PR00287">
    <property type="entry name" value="THIONIN"/>
</dbReference>
<dbReference type="SUPFAM" id="SSF57429">
    <property type="entry name" value="Crambin-like"/>
    <property type="match status" value="1"/>
</dbReference>
<dbReference type="PROSITE" id="PS00271">
    <property type="entry name" value="THIONIN"/>
    <property type="match status" value="1"/>
</dbReference>
<feature type="chain" id="PRO_0000221481" description="Thionin" evidence="2">
    <location>
        <begin position="1"/>
        <end position="47"/>
    </location>
</feature>
<feature type="disulfide bond" evidence="1">
    <location>
        <begin position="3"/>
        <end position="41"/>
    </location>
</feature>
<feature type="disulfide bond" evidence="1">
    <location>
        <begin position="4"/>
        <end position="33"/>
    </location>
</feature>
<feature type="disulfide bond" evidence="1">
    <location>
        <begin position="12"/>
        <end position="31"/>
    </location>
</feature>
<feature type="disulfide bond" evidence="1">
    <location>
        <begin position="16"/>
        <end position="27"/>
    </location>
</feature>
<protein>
    <recommendedName>
        <fullName evidence="3">Thionin</fullName>
    </recommendedName>
</protein>
<name>THN_PYRPU</name>
<keyword id="KW-0903">Direct protein sequencing</keyword>
<keyword id="KW-1015">Disulfide bond</keyword>
<keyword id="KW-0611">Plant defense</keyword>
<keyword id="KW-0964">Secreted</keyword>
<keyword id="KW-0800">Toxin</keyword>
<gene>
    <name type="primary">THI1</name>
</gene>
<accession>P07504</accession>
<comment type="function">
    <text>Thionins are small plant proteins which are toxic to animal cells. They seem to exert their toxic effect at the level of the cell membrane. Their precise function is not known.</text>
</comment>
<comment type="subcellular location">
    <subcellularLocation>
        <location>Secreted</location>
    </subcellularLocation>
</comment>
<comment type="similarity">
    <text evidence="4">Belongs to the plant thionin (TC 1.C.44) family. 4 C-C subfamily.</text>
</comment>
<proteinExistence type="evidence at protein level"/>
<organism>
    <name type="scientific">Pyrularia pubera</name>
    <name type="common">Buffalo nut</name>
    <name type="synonym">Oil nut</name>
    <dbReference type="NCBI Taxonomy" id="3960"/>
    <lineage>
        <taxon>Eukaryota</taxon>
        <taxon>Viridiplantae</taxon>
        <taxon>Streptophyta</taxon>
        <taxon>Embryophyta</taxon>
        <taxon>Tracheophyta</taxon>
        <taxon>Spermatophyta</taxon>
        <taxon>Magnoliopsida</taxon>
        <taxon>eudicotyledons</taxon>
        <taxon>Gunneridae</taxon>
        <taxon>Pentapetalae</taxon>
        <taxon>Santalales</taxon>
        <taxon>Cervantesiaceae</taxon>
        <taxon>Pyrularia</taxon>
    </lineage>
</organism>
<evidence type="ECO:0000250" key="1">
    <source>
        <dbReference type="UniProtKB" id="P60057"/>
    </source>
</evidence>
<evidence type="ECO:0000269" key="2">
    <source>
    </source>
</evidence>
<evidence type="ECO:0000303" key="3">
    <source>
    </source>
</evidence>
<evidence type="ECO:0000305" key="4"/>
<sequence length="47" mass="5288">KSCCRNTWARNCYNVCRLPGTISREICAKKCDCKIISGTTCPSDYPK</sequence>